<dbReference type="EMBL" id="AE016822">
    <property type="protein sequence ID" value="AAT88930.1"/>
    <property type="molecule type" value="Genomic_DNA"/>
</dbReference>
<dbReference type="RefSeq" id="WP_011185926.1">
    <property type="nucleotide sequence ID" value="NC_006087.1"/>
</dbReference>
<dbReference type="SMR" id="Q6AFB5"/>
<dbReference type="STRING" id="281090.Lxx10780"/>
<dbReference type="KEGG" id="lxx:Lxx10780"/>
<dbReference type="eggNOG" id="COG0632">
    <property type="taxonomic scope" value="Bacteria"/>
</dbReference>
<dbReference type="HOGENOM" id="CLU_087936_2_1_11"/>
<dbReference type="Proteomes" id="UP000001306">
    <property type="component" value="Chromosome"/>
</dbReference>
<dbReference type="GO" id="GO:0005737">
    <property type="term" value="C:cytoplasm"/>
    <property type="evidence" value="ECO:0007669"/>
    <property type="project" value="UniProtKB-SubCell"/>
</dbReference>
<dbReference type="GO" id="GO:0009379">
    <property type="term" value="C:Holliday junction helicase complex"/>
    <property type="evidence" value="ECO:0007669"/>
    <property type="project" value="InterPro"/>
</dbReference>
<dbReference type="GO" id="GO:0048476">
    <property type="term" value="C:Holliday junction resolvase complex"/>
    <property type="evidence" value="ECO:0007669"/>
    <property type="project" value="UniProtKB-UniRule"/>
</dbReference>
<dbReference type="GO" id="GO:0005524">
    <property type="term" value="F:ATP binding"/>
    <property type="evidence" value="ECO:0007669"/>
    <property type="project" value="InterPro"/>
</dbReference>
<dbReference type="GO" id="GO:0000400">
    <property type="term" value="F:four-way junction DNA binding"/>
    <property type="evidence" value="ECO:0007669"/>
    <property type="project" value="UniProtKB-UniRule"/>
</dbReference>
<dbReference type="GO" id="GO:0009378">
    <property type="term" value="F:four-way junction helicase activity"/>
    <property type="evidence" value="ECO:0007669"/>
    <property type="project" value="InterPro"/>
</dbReference>
<dbReference type="GO" id="GO:0006310">
    <property type="term" value="P:DNA recombination"/>
    <property type="evidence" value="ECO:0007669"/>
    <property type="project" value="UniProtKB-UniRule"/>
</dbReference>
<dbReference type="GO" id="GO:0006281">
    <property type="term" value="P:DNA repair"/>
    <property type="evidence" value="ECO:0007669"/>
    <property type="project" value="UniProtKB-UniRule"/>
</dbReference>
<dbReference type="CDD" id="cd14332">
    <property type="entry name" value="UBA_RuvA_C"/>
    <property type="match status" value="1"/>
</dbReference>
<dbReference type="Gene3D" id="1.10.150.20">
    <property type="entry name" value="5' to 3' exonuclease, C-terminal subdomain"/>
    <property type="match status" value="1"/>
</dbReference>
<dbReference type="Gene3D" id="1.10.8.10">
    <property type="entry name" value="DNA helicase RuvA subunit, C-terminal domain"/>
    <property type="match status" value="1"/>
</dbReference>
<dbReference type="Gene3D" id="2.40.50.140">
    <property type="entry name" value="Nucleic acid-binding proteins"/>
    <property type="match status" value="1"/>
</dbReference>
<dbReference type="HAMAP" id="MF_00031">
    <property type="entry name" value="DNA_HJ_migration_RuvA"/>
    <property type="match status" value="1"/>
</dbReference>
<dbReference type="InterPro" id="IPR013849">
    <property type="entry name" value="DNA_helicase_Holl-junc_RuvA_I"/>
</dbReference>
<dbReference type="InterPro" id="IPR003583">
    <property type="entry name" value="Hlx-hairpin-Hlx_DNA-bd_motif"/>
</dbReference>
<dbReference type="InterPro" id="IPR012340">
    <property type="entry name" value="NA-bd_OB-fold"/>
</dbReference>
<dbReference type="InterPro" id="IPR000085">
    <property type="entry name" value="RuvA"/>
</dbReference>
<dbReference type="InterPro" id="IPR010994">
    <property type="entry name" value="RuvA_2-like"/>
</dbReference>
<dbReference type="InterPro" id="IPR011114">
    <property type="entry name" value="RuvA_C"/>
</dbReference>
<dbReference type="InterPro" id="IPR036267">
    <property type="entry name" value="RuvA_C_sf"/>
</dbReference>
<dbReference type="NCBIfam" id="TIGR00084">
    <property type="entry name" value="ruvA"/>
    <property type="match status" value="1"/>
</dbReference>
<dbReference type="Pfam" id="PF14520">
    <property type="entry name" value="HHH_5"/>
    <property type="match status" value="1"/>
</dbReference>
<dbReference type="Pfam" id="PF07499">
    <property type="entry name" value="RuvA_C"/>
    <property type="match status" value="1"/>
</dbReference>
<dbReference type="Pfam" id="PF01330">
    <property type="entry name" value="RuvA_N"/>
    <property type="match status" value="1"/>
</dbReference>
<dbReference type="SMART" id="SM00278">
    <property type="entry name" value="HhH1"/>
    <property type="match status" value="2"/>
</dbReference>
<dbReference type="SUPFAM" id="SSF46929">
    <property type="entry name" value="DNA helicase RuvA subunit, C-terminal domain"/>
    <property type="match status" value="1"/>
</dbReference>
<dbReference type="SUPFAM" id="SSF50249">
    <property type="entry name" value="Nucleic acid-binding proteins"/>
    <property type="match status" value="1"/>
</dbReference>
<dbReference type="SUPFAM" id="SSF47781">
    <property type="entry name" value="RuvA domain 2-like"/>
    <property type="match status" value="1"/>
</dbReference>
<evidence type="ECO:0000255" key="1">
    <source>
        <dbReference type="HAMAP-Rule" id="MF_00031"/>
    </source>
</evidence>
<name>RUVA_LEIXX</name>
<feature type="chain" id="PRO_0000094643" description="Holliday junction branch migration complex subunit RuvA">
    <location>
        <begin position="1"/>
        <end position="207"/>
    </location>
</feature>
<feature type="region of interest" description="Domain I" evidence="1">
    <location>
        <begin position="1"/>
        <end position="63"/>
    </location>
</feature>
<feature type="region of interest" description="Domain II" evidence="1">
    <location>
        <begin position="64"/>
        <end position="142"/>
    </location>
</feature>
<feature type="region of interest" description="Flexible linker" evidence="1">
    <location>
        <begin position="142"/>
        <end position="146"/>
    </location>
</feature>
<feature type="region of interest" description="Domain III" evidence="1">
    <location>
        <begin position="147"/>
        <end position="207"/>
    </location>
</feature>
<reference key="1">
    <citation type="journal article" date="2004" name="Mol. Plant Microbe Interact.">
        <title>The genome sequence of the Gram-positive sugarcane pathogen Leifsonia xyli subsp. xyli.</title>
        <authorList>
            <person name="Monteiro-Vitorello C.B."/>
            <person name="Camargo L.E.A."/>
            <person name="Van Sluys M.A."/>
            <person name="Kitajima J.P."/>
            <person name="Truffi D."/>
            <person name="do Amaral A.M."/>
            <person name="Harakava R."/>
            <person name="de Oliveira J.C.F."/>
            <person name="Wood D."/>
            <person name="de Oliveira M.C."/>
            <person name="Miyaki C.Y."/>
            <person name="Takita M.A."/>
            <person name="da Silva A.C.R."/>
            <person name="Furlan L.R."/>
            <person name="Carraro D.M."/>
            <person name="Camarotte G."/>
            <person name="Almeida N.F. Jr."/>
            <person name="Carrer H."/>
            <person name="Coutinho L.L."/>
            <person name="El-Dorry H.A."/>
            <person name="Ferro M.I.T."/>
            <person name="Gagliardi P.R."/>
            <person name="Giglioti E."/>
            <person name="Goldman M.H.S."/>
            <person name="Goldman G.H."/>
            <person name="Kimura E.T."/>
            <person name="Ferro E.S."/>
            <person name="Kuramae E.E."/>
            <person name="Lemos E.G.M."/>
            <person name="Lemos M.V.F."/>
            <person name="Mauro S.M.Z."/>
            <person name="Machado M.A."/>
            <person name="Marino C.L."/>
            <person name="Menck C.F."/>
            <person name="Nunes L.R."/>
            <person name="Oliveira R.C."/>
            <person name="Pereira G.G."/>
            <person name="Siqueira W."/>
            <person name="de Souza A.A."/>
            <person name="Tsai S.M."/>
            <person name="Zanca A.S."/>
            <person name="Simpson A.J.G."/>
            <person name="Brumbley S.M."/>
            <person name="Setubal J.C."/>
        </authorList>
    </citation>
    <scope>NUCLEOTIDE SEQUENCE [LARGE SCALE GENOMIC DNA]</scope>
    <source>
        <strain>CTCB07</strain>
    </source>
</reference>
<accession>Q6AFB5</accession>
<gene>
    <name evidence="1" type="primary">ruvA</name>
    <name type="ordered locus">Lxx10780</name>
</gene>
<comment type="function">
    <text evidence="1">The RuvA-RuvB-RuvC complex processes Holliday junction (HJ) DNA during genetic recombination and DNA repair, while the RuvA-RuvB complex plays an important role in the rescue of blocked DNA replication forks via replication fork reversal (RFR). RuvA specifically binds to HJ cruciform DNA, conferring on it an open structure. The RuvB hexamer acts as an ATP-dependent pump, pulling dsDNA into and through the RuvAB complex. HJ branch migration allows RuvC to scan DNA until it finds its consensus sequence, where it cleaves and resolves the cruciform DNA.</text>
</comment>
<comment type="subunit">
    <text evidence="1">Homotetramer. Forms an RuvA(8)-RuvB(12)-Holliday junction (HJ) complex. HJ DNA is sandwiched between 2 RuvA tetramers; dsDNA enters through RuvA and exits via RuvB. An RuvB hexamer assembles on each DNA strand where it exits the tetramer. Each RuvB hexamer is contacted by two RuvA subunits (via domain III) on 2 adjacent RuvB subunits; this complex drives branch migration. In the full resolvosome a probable DNA-RuvA(4)-RuvB(12)-RuvC(2) complex forms which resolves the HJ.</text>
</comment>
<comment type="subcellular location">
    <subcellularLocation>
        <location evidence="1">Cytoplasm</location>
    </subcellularLocation>
</comment>
<comment type="domain">
    <text evidence="1">Has three domains with a flexible linker between the domains II and III and assumes an 'L' shape. Domain III is highly mobile and contacts RuvB.</text>
</comment>
<comment type="similarity">
    <text evidence="1">Belongs to the RuvA family.</text>
</comment>
<organism>
    <name type="scientific">Leifsonia xyli subsp. xyli (strain CTCB07)</name>
    <dbReference type="NCBI Taxonomy" id="281090"/>
    <lineage>
        <taxon>Bacteria</taxon>
        <taxon>Bacillati</taxon>
        <taxon>Actinomycetota</taxon>
        <taxon>Actinomycetes</taxon>
        <taxon>Micrococcales</taxon>
        <taxon>Microbacteriaceae</taxon>
        <taxon>Leifsonia</taxon>
    </lineage>
</organism>
<keyword id="KW-0963">Cytoplasm</keyword>
<keyword id="KW-0227">DNA damage</keyword>
<keyword id="KW-0233">DNA recombination</keyword>
<keyword id="KW-0234">DNA repair</keyword>
<keyword id="KW-0238">DNA-binding</keyword>
<keyword id="KW-1185">Reference proteome</keyword>
<protein>
    <recommendedName>
        <fullName evidence="1">Holliday junction branch migration complex subunit RuvA</fullName>
    </recommendedName>
</protein>
<proteinExistence type="inferred from homology"/>
<sequence length="207" mass="21045">MISSLRGTVLSASGGAAVIDVGGVGFAVQLTPDHARSLRVGDEAFVHTTLIVREDSLQLFGFSGLEQLQVFELLNGVSGVGPKSAISVLSVLSPDQVADAVAAADDAPFRAVSGIGPKTAKLIVVSLTGKLAACRRPSAPSARRPSAPSSVSDSVLVALVGLGWPEKVAGEAVAEVIAGTAESERDSVQTLLRLTLARLGPANQAAR</sequence>